<feature type="propeptide" id="PRO_0000431212" evidence="1">
    <location>
        <begin position="1"/>
        <end position="14"/>
    </location>
</feature>
<feature type="chain" id="PRO_0000361500" description="Photosystem II CP43 reaction center protein" evidence="1">
    <location>
        <begin position="15"/>
        <end position="473"/>
    </location>
</feature>
<feature type="transmembrane region" description="Helical" evidence="1">
    <location>
        <begin position="69"/>
        <end position="93"/>
    </location>
</feature>
<feature type="transmembrane region" description="Helical" evidence="1">
    <location>
        <begin position="134"/>
        <end position="155"/>
    </location>
</feature>
<feature type="transmembrane region" description="Helical" evidence="1">
    <location>
        <begin position="178"/>
        <end position="200"/>
    </location>
</feature>
<feature type="transmembrane region" description="Helical" evidence="1">
    <location>
        <begin position="255"/>
        <end position="275"/>
    </location>
</feature>
<feature type="transmembrane region" description="Helical" evidence="1">
    <location>
        <begin position="291"/>
        <end position="312"/>
    </location>
</feature>
<feature type="transmembrane region" description="Helical" evidence="1">
    <location>
        <begin position="447"/>
        <end position="471"/>
    </location>
</feature>
<feature type="binding site" evidence="1">
    <location>
        <position position="367"/>
    </location>
    <ligand>
        <name>[CaMn4O5] cluster</name>
        <dbReference type="ChEBI" id="CHEBI:189552"/>
    </ligand>
</feature>
<feature type="modified residue" description="N-acetylthreonine" evidence="1">
    <location>
        <position position="15"/>
    </location>
</feature>
<feature type="modified residue" description="Phosphothreonine" evidence="1">
    <location>
        <position position="15"/>
    </location>
</feature>
<keyword id="KW-0007">Acetylation</keyword>
<keyword id="KW-0148">Chlorophyll</keyword>
<keyword id="KW-0150">Chloroplast</keyword>
<keyword id="KW-0157">Chromophore</keyword>
<keyword id="KW-0464">Manganese</keyword>
<keyword id="KW-0472">Membrane</keyword>
<keyword id="KW-0479">Metal-binding</keyword>
<keyword id="KW-0597">Phosphoprotein</keyword>
<keyword id="KW-0602">Photosynthesis</keyword>
<keyword id="KW-0604">Photosystem II</keyword>
<keyword id="KW-0934">Plastid</keyword>
<keyword id="KW-0793">Thylakoid</keyword>
<keyword id="KW-0812">Transmembrane</keyword>
<keyword id="KW-1133">Transmembrane helix</keyword>
<gene>
    <name evidence="1" type="primary">psbC</name>
</gene>
<accession>Q32RS9</accession>
<organism>
    <name type="scientific">Staurastrum punctulatum</name>
    <name type="common">Green alga</name>
    <name type="synonym">Cosmoastrum punctulatum</name>
    <dbReference type="NCBI Taxonomy" id="102822"/>
    <lineage>
        <taxon>Eukaryota</taxon>
        <taxon>Viridiplantae</taxon>
        <taxon>Streptophyta</taxon>
        <taxon>Zygnematophyceae</taxon>
        <taxon>Zygnematophycidae</taxon>
        <taxon>Desmidiales</taxon>
        <taxon>Desmidiaceae</taxon>
        <taxon>Staurastrum</taxon>
    </lineage>
</organism>
<comment type="function">
    <text evidence="1">One of the components of the core complex of photosystem II (PSII). It binds chlorophyll and helps catalyze the primary light-induced photochemical processes of PSII. PSII is a light-driven water:plastoquinone oxidoreductase, using light energy to abstract electrons from H(2)O, generating O(2) and a proton gradient subsequently used for ATP formation.</text>
</comment>
<comment type="cofactor">
    <text evidence="1">Binds multiple chlorophylls and provides some of the ligands for the Ca-4Mn-5O cluster of the oxygen-evolving complex. It may also provide a ligand for a Cl- that is required for oxygen evolution. PSII binds additional chlorophylls, carotenoids and specific lipids.</text>
</comment>
<comment type="subunit">
    <text evidence="1">PSII is composed of 1 copy each of membrane proteins PsbA, PsbB, PsbC, PsbD, PsbE, PsbF, PsbH, PsbI, PsbJ, PsbK, PsbL, PsbM, PsbT, PsbX, PsbY, PsbZ, Psb30/Ycf12, at least 3 peripheral proteins of the oxygen-evolving complex and a large number of cofactors. It forms dimeric complexes.</text>
</comment>
<comment type="subcellular location">
    <subcellularLocation>
        <location evidence="1">Plastid</location>
        <location evidence="1">Chloroplast thylakoid membrane</location>
        <topology evidence="1">Multi-pass membrane protein</topology>
    </subcellularLocation>
</comment>
<comment type="similarity">
    <text evidence="1">Belongs to the PsbB/PsbC family. PsbC subfamily.</text>
</comment>
<comment type="sequence caution" evidence="2">
    <conflict type="erroneous initiation">
        <sequence resource="EMBL-CDS" id="AAX45723"/>
    </conflict>
    <text>Extended N-terminus.</text>
</comment>
<proteinExistence type="inferred from homology"/>
<dbReference type="EMBL" id="AY958085">
    <property type="protein sequence ID" value="AAX45723.1"/>
    <property type="status" value="ALT_INIT"/>
    <property type="molecule type" value="Genomic_DNA"/>
</dbReference>
<dbReference type="RefSeq" id="YP_636447.2">
    <property type="nucleotide sequence ID" value="NC_008116.1"/>
</dbReference>
<dbReference type="SMR" id="Q32RS9"/>
<dbReference type="GeneID" id="4108682"/>
<dbReference type="GO" id="GO:0009535">
    <property type="term" value="C:chloroplast thylakoid membrane"/>
    <property type="evidence" value="ECO:0007669"/>
    <property type="project" value="UniProtKB-SubCell"/>
</dbReference>
<dbReference type="GO" id="GO:0009523">
    <property type="term" value="C:photosystem II"/>
    <property type="evidence" value="ECO:0007669"/>
    <property type="project" value="UniProtKB-KW"/>
</dbReference>
<dbReference type="GO" id="GO:0016168">
    <property type="term" value="F:chlorophyll binding"/>
    <property type="evidence" value="ECO:0007669"/>
    <property type="project" value="UniProtKB-UniRule"/>
</dbReference>
<dbReference type="GO" id="GO:0045156">
    <property type="term" value="F:electron transporter, transferring electrons within the cyclic electron transport pathway of photosynthesis activity"/>
    <property type="evidence" value="ECO:0007669"/>
    <property type="project" value="InterPro"/>
</dbReference>
<dbReference type="GO" id="GO:0046872">
    <property type="term" value="F:metal ion binding"/>
    <property type="evidence" value="ECO:0007669"/>
    <property type="project" value="UniProtKB-KW"/>
</dbReference>
<dbReference type="GO" id="GO:0009772">
    <property type="term" value="P:photosynthetic electron transport in photosystem II"/>
    <property type="evidence" value="ECO:0007669"/>
    <property type="project" value="InterPro"/>
</dbReference>
<dbReference type="FunFam" id="1.10.10.670:FF:000001">
    <property type="entry name" value="Photosystem II CP43 reaction center protein"/>
    <property type="match status" value="1"/>
</dbReference>
<dbReference type="Gene3D" id="1.10.10.670">
    <property type="entry name" value="photosystem ii from thermosynechococcus elongatus"/>
    <property type="match status" value="1"/>
</dbReference>
<dbReference type="HAMAP" id="MF_01496">
    <property type="entry name" value="PSII_PsbC_CP43"/>
    <property type="match status" value="1"/>
</dbReference>
<dbReference type="InterPro" id="IPR000932">
    <property type="entry name" value="PS_antenna-like"/>
</dbReference>
<dbReference type="InterPro" id="IPR036001">
    <property type="entry name" value="PS_II_antenna-like_sf"/>
</dbReference>
<dbReference type="InterPro" id="IPR005869">
    <property type="entry name" value="PSII_PsbC"/>
</dbReference>
<dbReference type="InterPro" id="IPR044900">
    <property type="entry name" value="PSII_PsbC_sf"/>
</dbReference>
<dbReference type="NCBIfam" id="TIGR01153">
    <property type="entry name" value="psbC"/>
    <property type="match status" value="1"/>
</dbReference>
<dbReference type="Pfam" id="PF00421">
    <property type="entry name" value="PSII"/>
    <property type="match status" value="1"/>
</dbReference>
<dbReference type="SUPFAM" id="SSF161077">
    <property type="entry name" value="Photosystem II antenna protein-like"/>
    <property type="match status" value="1"/>
</dbReference>
<name>PSBC_STAPU</name>
<protein>
    <recommendedName>
        <fullName evidence="1">Photosystem II CP43 reaction center protein</fullName>
    </recommendedName>
    <alternativeName>
        <fullName evidence="1">PSII 43 kDa protein</fullName>
    </alternativeName>
    <alternativeName>
        <fullName evidence="1">Protein CP-43</fullName>
    </alternativeName>
</protein>
<evidence type="ECO:0000255" key="1">
    <source>
        <dbReference type="HAMAP-Rule" id="MF_01496"/>
    </source>
</evidence>
<evidence type="ECO:0000305" key="2"/>
<reference key="1">
    <citation type="journal article" date="2005" name="BMC Biol.">
        <title>The complete chloroplast DNA sequences of the charophycean green algae Staurastrum and Zygnema reveal that the chloroplast genome underwent extensive changes during the evolution of the Zygnematales.</title>
        <authorList>
            <person name="Turmel M."/>
            <person name="Otis C."/>
            <person name="Lemieux C."/>
        </authorList>
    </citation>
    <scope>NUCLEOTIDE SEQUENCE [LARGE SCALE GENOMIC DNA]</scope>
</reference>
<sequence>MKTLYSLRRFYHVETLFNGNLAVSGRDQETTGFAWWAGNARLINLSGKLLGAHVAHAGLIVFWAGAMNLFEVAHFVPEKPMYEQGLILLPHLATLGWGIGPGGEVVDTFPYFVSGVLHLISSAVLGFGGVYHALIGPETLEESFPFFGYVWKDKNKMTTILGIHLIILGLGAFLLVFKAVWFGGVYDTWAPGGGDVRKITNLTLNPGVIFGYLLKSPFGGEGWIVSVDNMEDIIGGHVWLGAICIFGGIWHILTKPFAWARRAFIWSGEAYLSYSLAAISMMGFIACCFVWFNNTAYPSEFYGPTGPEASQAQAFTFLVRDQRLGANVGSAQGPTGLGKYLMRSPTGEIIFGGETMRFWDLRAPWLEPLRGPNGLDLAKLKKDIQPWQERRSAEYMTHAPLGSLNSVGGVATEINAVNYVSPRSWLSTSHFVLGFFFFIAHLWHAGRARAAAAGFEKGIDRETEPVFFMNPLN</sequence>
<geneLocation type="chloroplast"/>